<organism>
    <name type="scientific">Caulobacter vibrioides (strain ATCC 19089 / CIP 103742 / CB 15)</name>
    <name type="common">Caulobacter crescentus</name>
    <dbReference type="NCBI Taxonomy" id="190650"/>
    <lineage>
        <taxon>Bacteria</taxon>
        <taxon>Pseudomonadati</taxon>
        <taxon>Pseudomonadota</taxon>
        <taxon>Alphaproteobacteria</taxon>
        <taxon>Caulobacterales</taxon>
        <taxon>Caulobacteraceae</taxon>
        <taxon>Caulobacter</taxon>
    </lineage>
</organism>
<comment type="function">
    <text evidence="1">Carrier of the growing fatty acid chain in fatty acid biosynthesis.</text>
</comment>
<comment type="pathway">
    <text evidence="1">Lipid metabolism; fatty acid biosynthesis.</text>
</comment>
<comment type="subcellular location">
    <subcellularLocation>
        <location evidence="1">Cytoplasm</location>
    </subcellularLocation>
</comment>
<comment type="PTM">
    <text evidence="1">4'-phosphopantetheine is transferred from CoA to a specific serine of apo-ACP by AcpS. This modification is essential for activity because fatty acids are bound in thioester linkage to the sulfhydryl of the prosthetic group.</text>
</comment>
<comment type="similarity">
    <text evidence="1">Belongs to the acyl carrier protein (ACP) family.</text>
</comment>
<evidence type="ECO:0000255" key="1">
    <source>
        <dbReference type="HAMAP-Rule" id="MF_01217"/>
    </source>
</evidence>
<evidence type="ECO:0000255" key="2">
    <source>
        <dbReference type="PROSITE-ProRule" id="PRU00258"/>
    </source>
</evidence>
<sequence>MSDILERVRKIVIEHLDADPEKVTEKASFIDDLGADSLDNVELVMAFEEEFDIEIPDDAAEHIQTVGDAVKFITEKTA</sequence>
<accession>Q9A7P3</accession>
<protein>
    <recommendedName>
        <fullName evidence="1">Acyl carrier protein</fullName>
        <shortName evidence="1">ACP</shortName>
    </recommendedName>
</protein>
<proteinExistence type="inferred from homology"/>
<gene>
    <name evidence="1" type="primary">acpP</name>
    <name type="ordered locus">CC_1677</name>
</gene>
<dbReference type="EMBL" id="AE005673">
    <property type="protein sequence ID" value="AAK23655.1"/>
    <property type="molecule type" value="Genomic_DNA"/>
</dbReference>
<dbReference type="PIR" id="C87457">
    <property type="entry name" value="C87457"/>
</dbReference>
<dbReference type="RefSeq" id="NP_420487.1">
    <property type="nucleotide sequence ID" value="NC_002696.2"/>
</dbReference>
<dbReference type="RefSeq" id="WP_004615098.1">
    <property type="nucleotide sequence ID" value="NC_002696.2"/>
</dbReference>
<dbReference type="SMR" id="Q9A7P3"/>
<dbReference type="STRING" id="190650.CC_1677"/>
<dbReference type="EnsemblBacteria" id="AAK23655">
    <property type="protein sequence ID" value="AAK23655"/>
    <property type="gene ID" value="CC_1677"/>
</dbReference>
<dbReference type="KEGG" id="ccr:CC_1677"/>
<dbReference type="PATRIC" id="fig|190650.5.peg.1706"/>
<dbReference type="eggNOG" id="COG0236">
    <property type="taxonomic scope" value="Bacteria"/>
</dbReference>
<dbReference type="HOGENOM" id="CLU_108696_5_1_5"/>
<dbReference type="UniPathway" id="UPA00094"/>
<dbReference type="Proteomes" id="UP000001816">
    <property type="component" value="Chromosome"/>
</dbReference>
<dbReference type="GO" id="GO:0005829">
    <property type="term" value="C:cytosol"/>
    <property type="evidence" value="ECO:0007669"/>
    <property type="project" value="TreeGrafter"/>
</dbReference>
<dbReference type="GO" id="GO:0016020">
    <property type="term" value="C:membrane"/>
    <property type="evidence" value="ECO:0007669"/>
    <property type="project" value="GOC"/>
</dbReference>
<dbReference type="GO" id="GO:0000035">
    <property type="term" value="F:acyl binding"/>
    <property type="evidence" value="ECO:0007669"/>
    <property type="project" value="TreeGrafter"/>
</dbReference>
<dbReference type="GO" id="GO:0000036">
    <property type="term" value="F:acyl carrier activity"/>
    <property type="evidence" value="ECO:0007669"/>
    <property type="project" value="UniProtKB-UniRule"/>
</dbReference>
<dbReference type="GO" id="GO:0009245">
    <property type="term" value="P:lipid A biosynthetic process"/>
    <property type="evidence" value="ECO:0007669"/>
    <property type="project" value="TreeGrafter"/>
</dbReference>
<dbReference type="FunFam" id="1.10.1200.10:FF:000001">
    <property type="entry name" value="Acyl carrier protein"/>
    <property type="match status" value="1"/>
</dbReference>
<dbReference type="Gene3D" id="1.10.1200.10">
    <property type="entry name" value="ACP-like"/>
    <property type="match status" value="1"/>
</dbReference>
<dbReference type="HAMAP" id="MF_01217">
    <property type="entry name" value="Acyl_carrier"/>
    <property type="match status" value="1"/>
</dbReference>
<dbReference type="InterPro" id="IPR003231">
    <property type="entry name" value="ACP"/>
</dbReference>
<dbReference type="InterPro" id="IPR036736">
    <property type="entry name" value="ACP-like_sf"/>
</dbReference>
<dbReference type="InterPro" id="IPR009081">
    <property type="entry name" value="PP-bd_ACP"/>
</dbReference>
<dbReference type="NCBIfam" id="TIGR00517">
    <property type="entry name" value="acyl_carrier"/>
    <property type="match status" value="1"/>
</dbReference>
<dbReference type="NCBIfam" id="NF002148">
    <property type="entry name" value="PRK00982.1-2"/>
    <property type="match status" value="1"/>
</dbReference>
<dbReference type="NCBIfam" id="NF002149">
    <property type="entry name" value="PRK00982.1-3"/>
    <property type="match status" value="1"/>
</dbReference>
<dbReference type="NCBIfam" id="NF002150">
    <property type="entry name" value="PRK00982.1-4"/>
    <property type="match status" value="1"/>
</dbReference>
<dbReference type="NCBIfam" id="NF002151">
    <property type="entry name" value="PRK00982.1-5"/>
    <property type="match status" value="1"/>
</dbReference>
<dbReference type="PANTHER" id="PTHR20863">
    <property type="entry name" value="ACYL CARRIER PROTEIN"/>
    <property type="match status" value="1"/>
</dbReference>
<dbReference type="PANTHER" id="PTHR20863:SF76">
    <property type="entry name" value="CARRIER DOMAIN-CONTAINING PROTEIN"/>
    <property type="match status" value="1"/>
</dbReference>
<dbReference type="Pfam" id="PF00550">
    <property type="entry name" value="PP-binding"/>
    <property type="match status" value="1"/>
</dbReference>
<dbReference type="SUPFAM" id="SSF47336">
    <property type="entry name" value="ACP-like"/>
    <property type="match status" value="1"/>
</dbReference>
<dbReference type="PROSITE" id="PS50075">
    <property type="entry name" value="CARRIER"/>
    <property type="match status" value="1"/>
</dbReference>
<reference key="1">
    <citation type="journal article" date="2001" name="Proc. Natl. Acad. Sci. U.S.A.">
        <title>Complete genome sequence of Caulobacter crescentus.</title>
        <authorList>
            <person name="Nierman W.C."/>
            <person name="Feldblyum T.V."/>
            <person name="Laub M.T."/>
            <person name="Paulsen I.T."/>
            <person name="Nelson K.E."/>
            <person name="Eisen J.A."/>
            <person name="Heidelberg J.F."/>
            <person name="Alley M.R.K."/>
            <person name="Ohta N."/>
            <person name="Maddock J.R."/>
            <person name="Potocka I."/>
            <person name="Nelson W.C."/>
            <person name="Newton A."/>
            <person name="Stephens C."/>
            <person name="Phadke N.D."/>
            <person name="Ely B."/>
            <person name="DeBoy R.T."/>
            <person name="Dodson R.J."/>
            <person name="Durkin A.S."/>
            <person name="Gwinn M.L."/>
            <person name="Haft D.H."/>
            <person name="Kolonay J.F."/>
            <person name="Smit J."/>
            <person name="Craven M.B."/>
            <person name="Khouri H.M."/>
            <person name="Shetty J."/>
            <person name="Berry K.J."/>
            <person name="Utterback T.R."/>
            <person name="Tran K."/>
            <person name="Wolf A.M."/>
            <person name="Vamathevan J.J."/>
            <person name="Ermolaeva M.D."/>
            <person name="White O."/>
            <person name="Salzberg S.L."/>
            <person name="Venter J.C."/>
            <person name="Shapiro L."/>
            <person name="Fraser C.M."/>
        </authorList>
    </citation>
    <scope>NUCLEOTIDE SEQUENCE [LARGE SCALE GENOMIC DNA]</scope>
    <source>
        <strain>ATCC 19089 / CIP 103742 / CB 15</strain>
    </source>
</reference>
<name>ACP_CAUVC</name>
<feature type="chain" id="PRO_0000180124" description="Acyl carrier protein">
    <location>
        <begin position="1"/>
        <end position="78"/>
    </location>
</feature>
<feature type="domain" description="Carrier" evidence="2">
    <location>
        <begin position="2"/>
        <end position="77"/>
    </location>
</feature>
<feature type="modified residue" description="O-(pantetheine 4'-phosphoryl)serine" evidence="2">
    <location>
        <position position="37"/>
    </location>
</feature>
<keyword id="KW-0963">Cytoplasm</keyword>
<keyword id="KW-0275">Fatty acid biosynthesis</keyword>
<keyword id="KW-0276">Fatty acid metabolism</keyword>
<keyword id="KW-0444">Lipid biosynthesis</keyword>
<keyword id="KW-0443">Lipid metabolism</keyword>
<keyword id="KW-0596">Phosphopantetheine</keyword>
<keyword id="KW-0597">Phosphoprotein</keyword>
<keyword id="KW-1185">Reference proteome</keyword>